<name>HBA_PIG</name>
<dbReference type="PIR" id="A02288">
    <property type="entry name" value="HAPG"/>
</dbReference>
<dbReference type="PDB" id="1QPW">
    <property type="method" value="X-ray"/>
    <property type="resolution" value="1.80 A"/>
    <property type="chains" value="A/C=1-141"/>
</dbReference>
<dbReference type="PDB" id="2PGH">
    <property type="method" value="X-ray"/>
    <property type="resolution" value="2.80 A"/>
    <property type="chains" value="A/C=1-141"/>
</dbReference>
<dbReference type="PDB" id="4F4O">
    <property type="method" value="X-ray"/>
    <property type="resolution" value="2.90 A"/>
    <property type="chains" value="A/D/G/J=1-141"/>
</dbReference>
<dbReference type="PDBsum" id="1QPW"/>
<dbReference type="PDBsum" id="2PGH"/>
<dbReference type="PDBsum" id="4F4O"/>
<dbReference type="SMR" id="P01965"/>
<dbReference type="DIP" id="DIP-38534N"/>
<dbReference type="FunCoup" id="P01965">
    <property type="interactions" value="22"/>
</dbReference>
<dbReference type="IntAct" id="P01965">
    <property type="interactions" value="2"/>
</dbReference>
<dbReference type="STRING" id="9823.ENSSSCP00000008517"/>
<dbReference type="PaxDb" id="9823-ENSSSCP00000008517"/>
<dbReference type="PeptideAtlas" id="P01965"/>
<dbReference type="eggNOG" id="KOG3378">
    <property type="taxonomic scope" value="Eukaryota"/>
</dbReference>
<dbReference type="InParanoid" id="P01965"/>
<dbReference type="OMA" id="NIMVVIC"/>
<dbReference type="EvolutionaryTrace" id="P01965"/>
<dbReference type="Proteomes" id="UP000008227">
    <property type="component" value="Unplaced"/>
</dbReference>
<dbReference type="Proteomes" id="UP000314985">
    <property type="component" value="Unplaced"/>
</dbReference>
<dbReference type="Proteomes" id="UP000694570">
    <property type="component" value="Unplaced"/>
</dbReference>
<dbReference type="Proteomes" id="UP000694571">
    <property type="component" value="Unplaced"/>
</dbReference>
<dbReference type="Proteomes" id="UP000694720">
    <property type="component" value="Unplaced"/>
</dbReference>
<dbReference type="Proteomes" id="UP000694722">
    <property type="component" value="Unplaced"/>
</dbReference>
<dbReference type="Proteomes" id="UP000694723">
    <property type="component" value="Unplaced"/>
</dbReference>
<dbReference type="Proteomes" id="UP000694724">
    <property type="component" value="Unplaced"/>
</dbReference>
<dbReference type="Proteomes" id="UP000694725">
    <property type="component" value="Unplaced"/>
</dbReference>
<dbReference type="Proteomes" id="UP000694726">
    <property type="component" value="Unplaced"/>
</dbReference>
<dbReference type="Proteomes" id="UP000694727">
    <property type="component" value="Unplaced"/>
</dbReference>
<dbReference type="Proteomes" id="UP000694728">
    <property type="component" value="Unplaced"/>
</dbReference>
<dbReference type="GO" id="GO:0031838">
    <property type="term" value="C:haptoglobin-hemoglobin complex"/>
    <property type="evidence" value="ECO:0000318"/>
    <property type="project" value="GO_Central"/>
</dbReference>
<dbReference type="GO" id="GO:0005833">
    <property type="term" value="C:hemoglobin complex"/>
    <property type="evidence" value="ECO:0000318"/>
    <property type="project" value="GO_Central"/>
</dbReference>
<dbReference type="GO" id="GO:0020037">
    <property type="term" value="F:heme binding"/>
    <property type="evidence" value="ECO:0000318"/>
    <property type="project" value="GO_Central"/>
</dbReference>
<dbReference type="GO" id="GO:0005506">
    <property type="term" value="F:iron ion binding"/>
    <property type="evidence" value="ECO:0007669"/>
    <property type="project" value="InterPro"/>
</dbReference>
<dbReference type="GO" id="GO:0019825">
    <property type="term" value="F:oxygen binding"/>
    <property type="evidence" value="ECO:0000318"/>
    <property type="project" value="GO_Central"/>
</dbReference>
<dbReference type="GO" id="GO:0005344">
    <property type="term" value="F:oxygen carrier activity"/>
    <property type="evidence" value="ECO:0000318"/>
    <property type="project" value="GO_Central"/>
</dbReference>
<dbReference type="GO" id="GO:0098869">
    <property type="term" value="P:cellular oxidant detoxification"/>
    <property type="evidence" value="ECO:0007669"/>
    <property type="project" value="GOC"/>
</dbReference>
<dbReference type="GO" id="GO:0042744">
    <property type="term" value="P:hydrogen peroxide catabolic process"/>
    <property type="evidence" value="ECO:0000318"/>
    <property type="project" value="GO_Central"/>
</dbReference>
<dbReference type="CDD" id="cd08927">
    <property type="entry name" value="Hb-alpha-like"/>
    <property type="match status" value="1"/>
</dbReference>
<dbReference type="FunFam" id="1.10.490.10:FF:000002">
    <property type="entry name" value="Hemoglobin subunit alpha"/>
    <property type="match status" value="1"/>
</dbReference>
<dbReference type="Gene3D" id="1.10.490.10">
    <property type="entry name" value="Globins"/>
    <property type="match status" value="1"/>
</dbReference>
<dbReference type="InterPro" id="IPR000971">
    <property type="entry name" value="Globin"/>
</dbReference>
<dbReference type="InterPro" id="IPR009050">
    <property type="entry name" value="Globin-like_sf"/>
</dbReference>
<dbReference type="InterPro" id="IPR012292">
    <property type="entry name" value="Globin/Proto"/>
</dbReference>
<dbReference type="InterPro" id="IPR002338">
    <property type="entry name" value="Hemoglobin_a-typ"/>
</dbReference>
<dbReference type="InterPro" id="IPR050056">
    <property type="entry name" value="Hemoglobin_oxygen_transport"/>
</dbReference>
<dbReference type="InterPro" id="IPR002339">
    <property type="entry name" value="Hemoglobin_pi"/>
</dbReference>
<dbReference type="PANTHER" id="PTHR11442">
    <property type="entry name" value="HEMOGLOBIN FAMILY MEMBER"/>
    <property type="match status" value="1"/>
</dbReference>
<dbReference type="PANTHER" id="PTHR11442:SF48">
    <property type="entry name" value="HEMOGLOBIN SUBUNIT ALPHA"/>
    <property type="match status" value="1"/>
</dbReference>
<dbReference type="Pfam" id="PF00042">
    <property type="entry name" value="Globin"/>
    <property type="match status" value="1"/>
</dbReference>
<dbReference type="PRINTS" id="PR00612">
    <property type="entry name" value="ALPHAHAEM"/>
</dbReference>
<dbReference type="PRINTS" id="PR00815">
    <property type="entry name" value="PIHAEM"/>
</dbReference>
<dbReference type="SUPFAM" id="SSF46458">
    <property type="entry name" value="Globin-like"/>
    <property type="match status" value="1"/>
</dbReference>
<dbReference type="PROSITE" id="PS01033">
    <property type="entry name" value="GLOBIN"/>
    <property type="match status" value="1"/>
</dbReference>
<keyword id="KW-0002">3D-structure</keyword>
<keyword id="KW-0007">Acetylation</keyword>
<keyword id="KW-0903">Direct protein sequencing</keyword>
<keyword id="KW-0349">Heme</keyword>
<keyword id="KW-0408">Iron</keyword>
<keyword id="KW-0479">Metal-binding</keyword>
<keyword id="KW-0561">Oxygen transport</keyword>
<keyword id="KW-0597">Phosphoprotein</keyword>
<keyword id="KW-1185">Reference proteome</keyword>
<keyword id="KW-0813">Transport</keyword>
<accession>P01965</accession>
<reference key="1">
    <citation type="journal article" date="1978" name="Hoppe-Seyler's Z. Physiol. Chem.">
        <title>Hemoglobins, XXI. Sequence analysis of porcine hemoglobin.</title>
        <authorList>
            <person name="Braunitzer G."/>
            <person name="Schrank B."/>
            <person name="Stangl A."/>
            <person name="Scheithauer U."/>
        </authorList>
    </citation>
    <scope>PROTEIN SEQUENCE</scope>
</reference>
<reference key="2">
    <citation type="journal article" date="1994" name="J. Mol. Biol.">
        <title>Structure determination of aquomet porcine hemoglobin at 2.8-A resolution.</title>
        <authorList>
            <person name="Katz D.S."/>
            <person name="White S.P."/>
            <person name="Huang W."/>
            <person name="Kumar R."/>
            <person name="Christianson D.W."/>
        </authorList>
    </citation>
    <scope>X-RAY CRYSTALLOGRAPHY (2.8 ANGSTROMS)</scope>
</reference>
<reference key="3">
    <citation type="journal article" date="2000" name="Acta Crystallogr. D">
        <title>Structure determination of porcine haemoglobin.</title>
        <authorList>
            <person name="Lu T.-H."/>
            <person name="Panneerselvam K."/>
            <person name="Liaw Y.-C."/>
            <person name="Kan P."/>
            <person name="Lee C.-J."/>
        </authorList>
    </citation>
    <scope>X-RAY CRYSTALLOGRAPHY (1.8 ANGSTROMS)</scope>
</reference>
<feature type="chain" id="PRO_0000052731" description="Hemoglobin subunit alpha">
    <location>
        <begin position="1"/>
        <end position="141"/>
    </location>
</feature>
<feature type="peptide" id="PRO_0000455926" description="Hemopressin" evidence="2">
    <location>
        <begin position="95"/>
        <end position="103"/>
    </location>
</feature>
<feature type="domain" description="Globin" evidence="4">
    <location>
        <begin position="1"/>
        <end position="141"/>
    </location>
</feature>
<feature type="binding site" evidence="4 5">
    <location>
        <position position="58"/>
    </location>
    <ligand>
        <name>O2</name>
        <dbReference type="ChEBI" id="CHEBI:15379"/>
    </ligand>
</feature>
<feature type="binding site" description="proximal binding residue" evidence="4 5">
    <location>
        <position position="87"/>
    </location>
    <ligand>
        <name>heme b</name>
        <dbReference type="ChEBI" id="CHEBI:60344"/>
    </ligand>
    <ligandPart>
        <name>Fe</name>
        <dbReference type="ChEBI" id="CHEBI:18248"/>
    </ligandPart>
</feature>
<feature type="modified residue" description="Phosphoserine" evidence="3">
    <location>
        <position position="3"/>
    </location>
</feature>
<feature type="modified residue" description="N6-succinyllysine" evidence="1">
    <location>
        <position position="7"/>
    </location>
</feature>
<feature type="modified residue" description="N6-succinyllysine" evidence="1">
    <location>
        <position position="11"/>
    </location>
</feature>
<feature type="modified residue" description="N6-acetyllysine; alternate" evidence="3">
    <location>
        <position position="16"/>
    </location>
</feature>
<feature type="modified residue" description="N6-succinyllysine; alternate" evidence="1">
    <location>
        <position position="16"/>
    </location>
</feature>
<feature type="modified residue" description="N6-succinyllysine" evidence="1">
    <location>
        <position position="40"/>
    </location>
</feature>
<feature type="modified residue" description="Phosphoserine" evidence="3">
    <location>
        <position position="49"/>
    </location>
</feature>
<feature type="modified residue" description="Phosphoserine" evidence="1">
    <location>
        <position position="102"/>
    </location>
</feature>
<feature type="modified residue" description="Phosphothreonine" evidence="1">
    <location>
        <position position="108"/>
    </location>
</feature>
<feature type="modified residue" description="Phosphoserine" evidence="1">
    <location>
        <position position="124"/>
    </location>
</feature>
<feature type="modified residue" description="Phosphothreonine" evidence="1">
    <location>
        <position position="134"/>
    </location>
</feature>
<feature type="modified residue" description="Phosphothreonine" evidence="1">
    <location>
        <position position="137"/>
    </location>
</feature>
<feature type="modified residue" description="Phosphoserine" evidence="1">
    <location>
        <position position="138"/>
    </location>
</feature>
<feature type="helix" evidence="6">
    <location>
        <begin position="4"/>
        <end position="15"/>
    </location>
</feature>
<feature type="helix" evidence="6">
    <location>
        <begin position="18"/>
        <end position="20"/>
    </location>
</feature>
<feature type="helix" evidence="6">
    <location>
        <begin position="21"/>
        <end position="35"/>
    </location>
</feature>
<feature type="helix" evidence="6">
    <location>
        <begin position="39"/>
        <end position="42"/>
    </location>
</feature>
<feature type="strand" evidence="7">
    <location>
        <begin position="49"/>
        <end position="51"/>
    </location>
</feature>
<feature type="helix" evidence="6">
    <location>
        <begin position="53"/>
        <end position="70"/>
    </location>
</feature>
<feature type="helix" evidence="6">
    <location>
        <begin position="73"/>
        <end position="75"/>
    </location>
</feature>
<feature type="helix" evidence="6">
    <location>
        <begin position="76"/>
        <end position="87"/>
    </location>
</feature>
<feature type="turn" evidence="6">
    <location>
        <begin position="88"/>
        <end position="91"/>
    </location>
</feature>
<feature type="helix" evidence="6">
    <location>
        <begin position="95"/>
        <end position="112"/>
    </location>
</feature>
<feature type="helix" evidence="6">
    <location>
        <begin position="114"/>
        <end position="116"/>
    </location>
</feature>
<feature type="helix" evidence="6">
    <location>
        <begin position="119"/>
        <end position="136"/>
    </location>
</feature>
<proteinExistence type="evidence at protein level"/>
<protein>
    <recommendedName>
        <fullName>Hemoglobin subunit alpha</fullName>
    </recommendedName>
    <alternativeName>
        <fullName>Alpha-globin</fullName>
    </alternativeName>
    <alternativeName>
        <fullName>Hemoglobin alpha chain</fullName>
    </alternativeName>
    <component>
        <recommendedName>
            <fullName evidence="2">Hemopressin</fullName>
        </recommendedName>
    </component>
</protein>
<organism>
    <name type="scientific">Sus scrofa</name>
    <name type="common">Pig</name>
    <dbReference type="NCBI Taxonomy" id="9823"/>
    <lineage>
        <taxon>Eukaryota</taxon>
        <taxon>Metazoa</taxon>
        <taxon>Chordata</taxon>
        <taxon>Craniata</taxon>
        <taxon>Vertebrata</taxon>
        <taxon>Euteleostomi</taxon>
        <taxon>Mammalia</taxon>
        <taxon>Eutheria</taxon>
        <taxon>Laurasiatheria</taxon>
        <taxon>Artiodactyla</taxon>
        <taxon>Suina</taxon>
        <taxon>Suidae</taxon>
        <taxon>Sus</taxon>
    </lineage>
</organism>
<comment type="function">
    <text>Involved in oxygen transport from the lung to the various peripheral tissues.</text>
</comment>
<comment type="function">
    <molecule>Hemopressin</molecule>
    <text evidence="2">Hemopressin acts as an antagonist peptide of the cannabinoid receptor CNR1. Hemopressin-binding efficiently blocks cannabinoid receptor CNR1 and subsequent signaling.</text>
</comment>
<comment type="subunit">
    <text>Heterotetramer of two alpha chains and two beta chains.</text>
</comment>
<comment type="tissue specificity">
    <text>Red blood cells.</text>
</comment>
<comment type="similarity">
    <text evidence="4">Belongs to the globin family.</text>
</comment>
<sequence length="141" mass="15039">VLSAADKANVKAAWGKVGGQAGAHGAEALERMFLGFPTTKTYFPHFNLSHGSDQVKAHGQKVADALTKAVGHLDDLPGALSALSDLHAHKLRVDPVNFKLLSHCLLVTLAAHHPDDFNPSVHASLDKFLANVSTVLTSKYR</sequence>
<gene>
    <name type="primary">HBA</name>
</gene>
<evidence type="ECO:0000250" key="1">
    <source>
        <dbReference type="UniProtKB" id="P01942"/>
    </source>
</evidence>
<evidence type="ECO:0000250" key="2">
    <source>
        <dbReference type="UniProtKB" id="P01946"/>
    </source>
</evidence>
<evidence type="ECO:0000250" key="3">
    <source>
        <dbReference type="UniProtKB" id="P69905"/>
    </source>
</evidence>
<evidence type="ECO:0000255" key="4">
    <source>
        <dbReference type="PROSITE-ProRule" id="PRU00238"/>
    </source>
</evidence>
<evidence type="ECO:0000269" key="5">
    <source>
    </source>
</evidence>
<evidence type="ECO:0007829" key="6">
    <source>
        <dbReference type="PDB" id="1QPW"/>
    </source>
</evidence>
<evidence type="ECO:0007829" key="7">
    <source>
        <dbReference type="PDB" id="2PGH"/>
    </source>
</evidence>